<keyword id="KW-0997">Cell inner membrane</keyword>
<keyword id="KW-1003">Cell membrane</keyword>
<keyword id="KW-0472">Membrane</keyword>
<keyword id="KW-0812">Transmembrane</keyword>
<keyword id="KW-1133">Transmembrane helix</keyword>
<gene>
    <name type="ordered locus">YPA_1127</name>
</gene>
<organism>
    <name type="scientific">Yersinia pestis bv. Antiqua (strain Antiqua)</name>
    <dbReference type="NCBI Taxonomy" id="360102"/>
    <lineage>
        <taxon>Bacteria</taxon>
        <taxon>Pseudomonadati</taxon>
        <taxon>Pseudomonadota</taxon>
        <taxon>Gammaproteobacteria</taxon>
        <taxon>Enterobacterales</taxon>
        <taxon>Yersiniaceae</taxon>
        <taxon>Yersinia</taxon>
    </lineage>
</organism>
<evidence type="ECO:0000255" key="1">
    <source>
        <dbReference type="HAMAP-Rule" id="MF_01071"/>
    </source>
</evidence>
<proteinExistence type="inferred from homology"/>
<name>Y1127_YERPA</name>
<accession>Q1C8X8</accession>
<reference key="1">
    <citation type="journal article" date="2006" name="J. Bacteriol.">
        <title>Complete genome sequence of Yersinia pestis strains Antiqua and Nepal516: evidence of gene reduction in an emerging pathogen.</title>
        <authorList>
            <person name="Chain P.S.G."/>
            <person name="Hu P."/>
            <person name="Malfatti S.A."/>
            <person name="Radnedge L."/>
            <person name="Larimer F."/>
            <person name="Vergez L.M."/>
            <person name="Worsham P."/>
            <person name="Chu M.C."/>
            <person name="Andersen G.L."/>
        </authorList>
    </citation>
    <scope>NUCLEOTIDE SEQUENCE [LARGE SCALE GENOMIC DNA]</scope>
    <source>
        <strain>Antiqua</strain>
    </source>
</reference>
<protein>
    <recommendedName>
        <fullName evidence="1">UPF0266 membrane protein YPA_1127</fullName>
    </recommendedName>
</protein>
<dbReference type="EMBL" id="CP000308">
    <property type="protein sequence ID" value="ABG13094.1"/>
    <property type="molecule type" value="Genomic_DNA"/>
</dbReference>
<dbReference type="RefSeq" id="WP_002211066.1">
    <property type="nucleotide sequence ID" value="NZ_CP009906.1"/>
</dbReference>
<dbReference type="KEGG" id="ypa:YPA_1127"/>
<dbReference type="Proteomes" id="UP000001971">
    <property type="component" value="Chromosome"/>
</dbReference>
<dbReference type="GO" id="GO:0005886">
    <property type="term" value="C:plasma membrane"/>
    <property type="evidence" value="ECO:0007669"/>
    <property type="project" value="UniProtKB-SubCell"/>
</dbReference>
<dbReference type="HAMAP" id="MF_01071">
    <property type="entry name" value="UPF0266"/>
    <property type="match status" value="1"/>
</dbReference>
<dbReference type="InterPro" id="IPR009328">
    <property type="entry name" value="DUF986"/>
</dbReference>
<dbReference type="NCBIfam" id="NF002791">
    <property type="entry name" value="PRK02913.1"/>
    <property type="match status" value="1"/>
</dbReference>
<dbReference type="Pfam" id="PF06173">
    <property type="entry name" value="DUF986"/>
    <property type="match status" value="1"/>
</dbReference>
<dbReference type="PIRSF" id="PIRSF020687">
    <property type="entry name" value="UCP020687"/>
    <property type="match status" value="1"/>
</dbReference>
<feature type="chain" id="PRO_1000064597" description="UPF0266 membrane protein YPA_1127">
    <location>
        <begin position="1"/>
        <end position="153"/>
    </location>
</feature>
<feature type="transmembrane region" description="Helical" evidence="1">
    <location>
        <begin position="6"/>
        <end position="26"/>
    </location>
</feature>
<feature type="transmembrane region" description="Helical" evidence="1">
    <location>
        <begin position="45"/>
        <end position="65"/>
    </location>
</feature>
<feature type="transmembrane region" description="Helical" evidence="1">
    <location>
        <begin position="67"/>
        <end position="87"/>
    </location>
</feature>
<sequence>MSVTDLVLVVFIALLLIYAIYDEFIMNMMKGKTRLQVHLKRKNKLDCMIFVGLIGILIYNNVMAHGAPLTTYLLVGLALVAVYISYIRWPKLLFKNTGFFYANTFIEYSRIKSMNLSEDGILVIDLEQRRLLIQVKKLDDLEKIYNFFIENQS</sequence>
<comment type="subcellular location">
    <subcellularLocation>
        <location evidence="1">Cell inner membrane</location>
        <topology evidence="1">Multi-pass membrane protein</topology>
    </subcellularLocation>
</comment>
<comment type="similarity">
    <text evidence="1">Belongs to the UPF0266 family.</text>
</comment>